<protein>
    <recommendedName>
        <fullName>Molybdenum cofactor biosynthesis protein B</fullName>
    </recommendedName>
</protein>
<feature type="chain" id="PRO_0000170967" description="Molybdenum cofactor biosynthesis protein B">
    <location>
        <begin position="1"/>
        <end position="169"/>
    </location>
</feature>
<feature type="strand" evidence="4">
    <location>
        <begin position="15"/>
        <end position="21"/>
    </location>
</feature>
<feature type="turn" evidence="4">
    <location>
        <begin position="27"/>
        <end position="29"/>
    </location>
</feature>
<feature type="helix" evidence="4">
    <location>
        <begin position="31"/>
        <end position="43"/>
    </location>
</feature>
<feature type="strand" evidence="4">
    <location>
        <begin position="46"/>
        <end position="53"/>
    </location>
</feature>
<feature type="helix" evidence="4">
    <location>
        <begin position="57"/>
        <end position="68"/>
    </location>
</feature>
<feature type="strand" evidence="4">
    <location>
        <begin position="74"/>
        <end position="79"/>
    </location>
</feature>
<feature type="strand" evidence="4">
    <location>
        <begin position="83"/>
        <end position="85"/>
    </location>
</feature>
<feature type="helix" evidence="4">
    <location>
        <begin position="90"/>
        <end position="95"/>
    </location>
</feature>
<feature type="strand" evidence="4">
    <location>
        <begin position="99"/>
        <end position="101"/>
    </location>
</feature>
<feature type="helix" evidence="4">
    <location>
        <begin position="104"/>
        <end position="116"/>
    </location>
</feature>
<feature type="helix" evidence="4">
    <location>
        <begin position="119"/>
        <end position="124"/>
    </location>
</feature>
<feature type="strand" evidence="4">
    <location>
        <begin position="128"/>
        <end position="132"/>
    </location>
</feature>
<feature type="strand" evidence="4">
    <location>
        <begin position="135"/>
        <end position="140"/>
    </location>
</feature>
<feature type="helix" evidence="4">
    <location>
        <begin position="144"/>
        <end position="153"/>
    </location>
</feature>
<feature type="helix" evidence="4">
    <location>
        <begin position="155"/>
        <end position="166"/>
    </location>
</feature>
<name>MOAB_BACCR</name>
<organism>
    <name type="scientific">Bacillus cereus (strain ATCC 14579 / DSM 31 / CCUG 7414 / JCM 2152 / NBRC 15305 / NCIMB 9373 / NCTC 2599 / NRRL B-3711)</name>
    <dbReference type="NCBI Taxonomy" id="226900"/>
    <lineage>
        <taxon>Bacteria</taxon>
        <taxon>Bacillati</taxon>
        <taxon>Bacillota</taxon>
        <taxon>Bacilli</taxon>
        <taxon>Bacillales</taxon>
        <taxon>Bacillaceae</taxon>
        <taxon>Bacillus</taxon>
        <taxon>Bacillus cereus group</taxon>
    </lineage>
</organism>
<proteinExistence type="evidence at protein level"/>
<evidence type="ECO:0000250" key="1"/>
<evidence type="ECO:0000269" key="2">
    <source ref="2"/>
</evidence>
<evidence type="ECO:0000305" key="3"/>
<evidence type="ECO:0007829" key="4">
    <source>
        <dbReference type="PDB" id="1Y5E"/>
    </source>
</evidence>
<reference key="1">
    <citation type="journal article" date="2003" name="Nature">
        <title>Genome sequence of Bacillus cereus and comparative analysis with Bacillus anthracis.</title>
        <authorList>
            <person name="Ivanova N."/>
            <person name="Sorokin A."/>
            <person name="Anderson I."/>
            <person name="Galleron N."/>
            <person name="Candelon B."/>
            <person name="Kapatral V."/>
            <person name="Bhattacharyya A."/>
            <person name="Reznik G."/>
            <person name="Mikhailova N."/>
            <person name="Lapidus A."/>
            <person name="Chu L."/>
            <person name="Mazur M."/>
            <person name="Goltsman E."/>
            <person name="Larsen N."/>
            <person name="D'Souza M."/>
            <person name="Walunas T."/>
            <person name="Grechkin Y."/>
            <person name="Pusch G."/>
            <person name="Haselkorn R."/>
            <person name="Fonstein M."/>
            <person name="Ehrlich S.D."/>
            <person name="Overbeek R."/>
            <person name="Kyrpides N.C."/>
        </authorList>
    </citation>
    <scope>NUCLEOTIDE SEQUENCE [LARGE SCALE GENOMIC DNA]</scope>
    <source>
        <strain>ATCC 14579 / DSM 31 / CCUG 7414 / JCM 2152 / NBRC 15305 / NCIMB 9373 / NCTC 2599 / NRRL B-3711</strain>
    </source>
</reference>
<reference key="2">
    <citation type="submission" date="2006-05" db="PDB data bank">
        <title>Crystal structure of molybdenum cofactor biosynthesis protein B.</title>
        <authorList>
            <consortium name="Midwest center for structural genomics (MCSG)"/>
        </authorList>
    </citation>
    <scope>X-RAY CRYSTALLOGRAPHY (1.90 ANGSTROMS)</scope>
    <scope>SUBUNIT</scope>
</reference>
<comment type="function">
    <text evidence="1">May be involved in the biosynthesis of molybdopterin.</text>
</comment>
<comment type="pathway">
    <text>Cofactor biosynthesis; molybdopterin biosynthesis.</text>
</comment>
<comment type="subunit">
    <text evidence="2">Homotrimer.</text>
</comment>
<comment type="similarity">
    <text evidence="3">Belongs to the MoaB/Mog family.</text>
</comment>
<keyword id="KW-0002">3D-structure</keyword>
<keyword id="KW-0501">Molybdenum cofactor biosynthesis</keyword>
<keyword id="KW-1185">Reference proteome</keyword>
<dbReference type="EMBL" id="AE016877">
    <property type="protein sequence ID" value="AAP11663.1"/>
    <property type="molecule type" value="Genomic_DNA"/>
</dbReference>
<dbReference type="RefSeq" id="NP_834462.1">
    <property type="nucleotide sequence ID" value="NC_004722.1"/>
</dbReference>
<dbReference type="RefSeq" id="WP_000117124.1">
    <property type="nucleotide sequence ID" value="NZ_CP138336.1"/>
</dbReference>
<dbReference type="PDB" id="1Y5E">
    <property type="method" value="X-ray"/>
    <property type="resolution" value="1.90 A"/>
    <property type="chains" value="A/B/C=1-169"/>
</dbReference>
<dbReference type="PDBsum" id="1Y5E"/>
<dbReference type="SMR" id="Q816R0"/>
<dbReference type="STRING" id="226900.BC_4758"/>
<dbReference type="DrugBank" id="DB03366">
    <property type="generic name" value="Imidazole"/>
</dbReference>
<dbReference type="KEGG" id="bce:BC4758"/>
<dbReference type="PATRIC" id="fig|226900.8.peg.4921"/>
<dbReference type="HOGENOM" id="CLU_077358_2_3_9"/>
<dbReference type="OrthoDB" id="9784492at2"/>
<dbReference type="UniPathway" id="UPA00344"/>
<dbReference type="EvolutionaryTrace" id="Q816R0"/>
<dbReference type="Proteomes" id="UP000001417">
    <property type="component" value="Chromosome"/>
</dbReference>
<dbReference type="GO" id="GO:0005829">
    <property type="term" value="C:cytosol"/>
    <property type="evidence" value="ECO:0000318"/>
    <property type="project" value="GO_Central"/>
</dbReference>
<dbReference type="GO" id="GO:0006777">
    <property type="term" value="P:Mo-molybdopterin cofactor biosynthetic process"/>
    <property type="evidence" value="ECO:0007669"/>
    <property type="project" value="UniProtKB-KW"/>
</dbReference>
<dbReference type="CDD" id="cd00886">
    <property type="entry name" value="MogA_MoaB"/>
    <property type="match status" value="1"/>
</dbReference>
<dbReference type="FunFam" id="3.40.980.10:FF:000006">
    <property type="entry name" value="Molybdenum cofactor biosynthesis protein B"/>
    <property type="match status" value="1"/>
</dbReference>
<dbReference type="Gene3D" id="3.40.980.10">
    <property type="entry name" value="MoaB/Mog-like domain"/>
    <property type="match status" value="1"/>
</dbReference>
<dbReference type="InterPro" id="IPR012245">
    <property type="entry name" value="MoaB"/>
</dbReference>
<dbReference type="InterPro" id="IPR036425">
    <property type="entry name" value="MoaB/Mog-like_dom_sf"/>
</dbReference>
<dbReference type="InterPro" id="IPR001453">
    <property type="entry name" value="MoaB/Mog_dom"/>
</dbReference>
<dbReference type="InterPro" id="IPR008284">
    <property type="entry name" value="MoCF_biosynth_CS"/>
</dbReference>
<dbReference type="NCBIfam" id="TIGR00177">
    <property type="entry name" value="molyb_syn"/>
    <property type="match status" value="1"/>
</dbReference>
<dbReference type="PANTHER" id="PTHR43232">
    <property type="entry name" value="MOLYBDENUM COFACTOR BIOSYNTHESIS PROTEIN B"/>
    <property type="match status" value="1"/>
</dbReference>
<dbReference type="PANTHER" id="PTHR43232:SF2">
    <property type="entry name" value="MOLYBDENUM COFACTOR BIOSYNTHESIS PROTEIN B"/>
    <property type="match status" value="1"/>
</dbReference>
<dbReference type="Pfam" id="PF00994">
    <property type="entry name" value="MoCF_biosynth"/>
    <property type="match status" value="1"/>
</dbReference>
<dbReference type="PIRSF" id="PIRSF006443">
    <property type="entry name" value="MoaB"/>
    <property type="match status" value="1"/>
</dbReference>
<dbReference type="SMART" id="SM00852">
    <property type="entry name" value="MoCF_biosynth"/>
    <property type="match status" value="1"/>
</dbReference>
<dbReference type="SUPFAM" id="SSF53218">
    <property type="entry name" value="Molybdenum cofactor biosynthesis proteins"/>
    <property type="match status" value="1"/>
</dbReference>
<dbReference type="PROSITE" id="PS01078">
    <property type="entry name" value="MOCF_BIOSYNTHESIS_1"/>
    <property type="match status" value="1"/>
</dbReference>
<sequence length="169" mass="18535">MSVTEHKKQAPKEVRCKIVTISDTRTEETDKSGQLLHELLKEAGHKVTSYEIVKDDKESIQQAVLAGYHKEDVDVVLTNGGTGITKRDVTIEAVSALLDKEIVGFGELFRMISYLEDIGSSAMLSRAIGGTIGRKVVFSMPGSSGAVRLAMNKLILPELGHITFELHRQ</sequence>
<accession>Q816R0</accession>
<gene>
    <name type="primary">moaB</name>
    <name type="ordered locus">BC_4758</name>
</gene>